<gene>
    <name type="primary">hoxc8a</name>
    <name type="synonym">hoxc8</name>
</gene>
<evidence type="ECO:0000250" key="1"/>
<evidence type="ECO:0000255" key="2">
    <source>
        <dbReference type="PROSITE-ProRule" id="PRU00108"/>
    </source>
</evidence>
<evidence type="ECO:0000256" key="3">
    <source>
        <dbReference type="SAM" id="MobiDB-lite"/>
    </source>
</evidence>
<evidence type="ECO:0000305" key="4"/>
<reference key="1">
    <citation type="journal article" date="1997" name="Nat. Genet.">
        <title>Organization of the Fugu rubripes Hox clusters: evidence for continuing evolution of vertebrate Hox complexes.</title>
        <authorList>
            <person name="Aparicio S.J."/>
            <person name="Hawker K."/>
            <person name="Cottage A."/>
            <person name="Mikawa Y."/>
            <person name="Zuo L."/>
            <person name="Venkatesh B."/>
            <person name="Chen E."/>
            <person name="Krumlauf R."/>
            <person name="Brenner S."/>
        </authorList>
    </citation>
    <scope>NUCLEOTIDE SEQUENCE [GENOMIC DNA]</scope>
</reference>
<reference key="2">
    <citation type="journal article" date="2006" name="Proc. Natl. Acad. Sci. U.S.A.">
        <title>Highly conserved syntenic blocks at the vertebrate Hox loci and conserved regulatory elements within and outside Hox gene clusters.</title>
        <authorList>
            <person name="Lee A.P."/>
            <person name="Koh E.G.L."/>
            <person name="Tay A."/>
            <person name="Brenner S."/>
            <person name="Venkatesh B."/>
        </authorList>
    </citation>
    <scope>NUCLEOTIDE SEQUENCE [GENOMIC DNA]</scope>
</reference>
<name>HXC8A_TAKRU</name>
<proteinExistence type="inferred from homology"/>
<sequence length="392" mass="45427">MSSYFVNPLFSKYKGGESLEPTYYDCRFPQSVARSHTLVYGPGGAAPGFQHPSHHVQDFFHHGTTGISNPGYQQNPCALACHGDATKFYGYEALPRQTLYGTQQDASLAQYPDCKSSSSSNPGEGQGHLNQNSSPSLMFPWMRPHGQNNTVISYIFSPMFLCVRAYVRVCVCMSVFVCVLKCCLSARVSLTYKMKLVREHDGAHRTCTAGCCCSAAHVHTGLDGRRNGRQTYSRYQTLELEKEFLFNPYLTRKRRIEVSHALSLTERQVKIWFQNRRMKWKKENNKTSFRVRGERLKPRKRATRTVKGKRRKRKKRKRKRRPRSDFMVLFMVIWLKGRKKEWPHKQMKSHKESESVNFMTILSFFFCREENRNPTNVAVINRQKKSSTFILT</sequence>
<organism>
    <name type="scientific">Takifugu rubripes</name>
    <name type="common">Japanese pufferfish</name>
    <name type="synonym">Fugu rubripes</name>
    <dbReference type="NCBI Taxonomy" id="31033"/>
    <lineage>
        <taxon>Eukaryota</taxon>
        <taxon>Metazoa</taxon>
        <taxon>Chordata</taxon>
        <taxon>Craniata</taxon>
        <taxon>Vertebrata</taxon>
        <taxon>Euteleostomi</taxon>
        <taxon>Actinopterygii</taxon>
        <taxon>Neopterygii</taxon>
        <taxon>Teleostei</taxon>
        <taxon>Neoteleostei</taxon>
        <taxon>Acanthomorphata</taxon>
        <taxon>Eupercaria</taxon>
        <taxon>Tetraodontiformes</taxon>
        <taxon>Tetradontoidea</taxon>
        <taxon>Tetraodontidae</taxon>
        <taxon>Takifugu</taxon>
    </lineage>
</organism>
<comment type="function">
    <text evidence="1">Sequence-specific transcription factor which is part of a developmental regulatory system that provides cells with specific positional identities on the anterior-posterior axis.</text>
</comment>
<comment type="subcellular location">
    <subcellularLocation>
        <location evidence="2">Nucleus</location>
    </subcellularLocation>
</comment>
<comment type="similarity">
    <text evidence="4">Belongs to the Antp homeobox family.</text>
</comment>
<protein>
    <recommendedName>
        <fullName>Homeobox protein Hox-C8a</fullName>
    </recommendedName>
    <alternativeName>
        <fullName>FrHOXC-8</fullName>
    </alternativeName>
</protein>
<keyword id="KW-0217">Developmental protein</keyword>
<keyword id="KW-0238">DNA-binding</keyword>
<keyword id="KW-0371">Homeobox</keyword>
<keyword id="KW-0539">Nucleus</keyword>
<keyword id="KW-1185">Reference proteome</keyword>
<keyword id="KW-0804">Transcription</keyword>
<keyword id="KW-0805">Transcription regulation</keyword>
<feature type="chain" id="PRO_0000265989" description="Homeobox protein Hox-C8a">
    <location>
        <begin position="1"/>
        <end position="392"/>
    </location>
</feature>
<feature type="DNA-binding region" description="Homeobox" evidence="2">
    <location>
        <begin position="225"/>
        <end position="284"/>
    </location>
</feature>
<feature type="region of interest" description="Disordered" evidence="3">
    <location>
        <begin position="290"/>
        <end position="321"/>
    </location>
</feature>
<feature type="short sequence motif" description="Antp-type hexapeptide">
    <location>
        <begin position="138"/>
        <end position="143"/>
    </location>
</feature>
<feature type="compositionally biased region" description="Basic residues" evidence="3">
    <location>
        <begin position="297"/>
        <end position="321"/>
    </location>
</feature>
<dbReference type="EMBL" id="U92572">
    <property type="protein sequence ID" value="AAB68681.1"/>
    <property type="molecule type" value="Genomic_DNA"/>
</dbReference>
<dbReference type="EMBL" id="DQ481667">
    <property type="protein sequence ID" value="ABF22445.1"/>
    <property type="molecule type" value="Genomic_DNA"/>
</dbReference>
<dbReference type="SMR" id="O42503"/>
<dbReference type="FunCoup" id="O42503">
    <property type="interactions" value="83"/>
</dbReference>
<dbReference type="InParanoid" id="O42503"/>
<dbReference type="Proteomes" id="UP000005226">
    <property type="component" value="Unplaced"/>
</dbReference>
<dbReference type="GO" id="GO:0005634">
    <property type="term" value="C:nucleus"/>
    <property type="evidence" value="ECO:0007669"/>
    <property type="project" value="UniProtKB-SubCell"/>
</dbReference>
<dbReference type="GO" id="GO:0000981">
    <property type="term" value="F:DNA-binding transcription factor activity, RNA polymerase II-specific"/>
    <property type="evidence" value="ECO:0007669"/>
    <property type="project" value="InterPro"/>
</dbReference>
<dbReference type="GO" id="GO:0000977">
    <property type="term" value="F:RNA polymerase II transcription regulatory region sequence-specific DNA binding"/>
    <property type="evidence" value="ECO:0007669"/>
    <property type="project" value="TreeGrafter"/>
</dbReference>
<dbReference type="CDD" id="cd00086">
    <property type="entry name" value="homeodomain"/>
    <property type="match status" value="1"/>
</dbReference>
<dbReference type="Gene3D" id="1.10.10.60">
    <property type="entry name" value="Homeodomain-like"/>
    <property type="match status" value="1"/>
</dbReference>
<dbReference type="InterPro" id="IPR050948">
    <property type="entry name" value="Antp_homeobox_TF"/>
</dbReference>
<dbReference type="InterPro" id="IPR001356">
    <property type="entry name" value="HD"/>
</dbReference>
<dbReference type="InterPro" id="IPR020479">
    <property type="entry name" value="HD_metazoa"/>
</dbReference>
<dbReference type="InterPro" id="IPR001827">
    <property type="entry name" value="Homeobox_Antennapedia_CS"/>
</dbReference>
<dbReference type="InterPro" id="IPR017970">
    <property type="entry name" value="Homeobox_CS"/>
</dbReference>
<dbReference type="InterPro" id="IPR009057">
    <property type="entry name" value="Homeodomain-like_sf"/>
</dbReference>
<dbReference type="PANTHER" id="PTHR46166">
    <property type="entry name" value="HOMEOBOX DOMAIN-CONTAINING PROTEIN"/>
    <property type="match status" value="1"/>
</dbReference>
<dbReference type="PANTHER" id="PTHR46166:SF4">
    <property type="entry name" value="HOMEOBOX PROTEIN HOX-C8"/>
    <property type="match status" value="1"/>
</dbReference>
<dbReference type="Pfam" id="PF00046">
    <property type="entry name" value="Homeodomain"/>
    <property type="match status" value="1"/>
</dbReference>
<dbReference type="PRINTS" id="PR00024">
    <property type="entry name" value="HOMEOBOX"/>
</dbReference>
<dbReference type="SMART" id="SM00389">
    <property type="entry name" value="HOX"/>
    <property type="match status" value="1"/>
</dbReference>
<dbReference type="SUPFAM" id="SSF46689">
    <property type="entry name" value="Homeodomain-like"/>
    <property type="match status" value="1"/>
</dbReference>
<dbReference type="PROSITE" id="PS00032">
    <property type="entry name" value="ANTENNAPEDIA"/>
    <property type="match status" value="1"/>
</dbReference>
<dbReference type="PROSITE" id="PS00027">
    <property type="entry name" value="HOMEOBOX_1"/>
    <property type="match status" value="1"/>
</dbReference>
<dbReference type="PROSITE" id="PS50071">
    <property type="entry name" value="HOMEOBOX_2"/>
    <property type="match status" value="1"/>
</dbReference>
<accession>O42503</accession>